<organism>
    <name type="scientific">Arabidopsis thaliana</name>
    <name type="common">Mouse-ear cress</name>
    <dbReference type="NCBI Taxonomy" id="3702"/>
    <lineage>
        <taxon>Eukaryota</taxon>
        <taxon>Viridiplantae</taxon>
        <taxon>Streptophyta</taxon>
        <taxon>Embryophyta</taxon>
        <taxon>Tracheophyta</taxon>
        <taxon>Spermatophyta</taxon>
        <taxon>Magnoliopsida</taxon>
        <taxon>eudicotyledons</taxon>
        <taxon>Gunneridae</taxon>
        <taxon>Pentapetalae</taxon>
        <taxon>rosids</taxon>
        <taxon>malvids</taxon>
        <taxon>Brassicales</taxon>
        <taxon>Brassicaceae</taxon>
        <taxon>Camelineae</taxon>
        <taxon>Arabidopsis</taxon>
    </lineage>
</organism>
<dbReference type="EMBL" id="AP000600">
    <property type="protein sequence ID" value="BAB02970.1"/>
    <property type="molecule type" value="Genomic_DNA"/>
</dbReference>
<dbReference type="EMBL" id="CP002686">
    <property type="protein sequence ID" value="AEE75462.1"/>
    <property type="molecule type" value="Genomic_DNA"/>
</dbReference>
<dbReference type="RefSeq" id="NP_566474.1">
    <property type="nucleotide sequence ID" value="NM_112262.2"/>
</dbReference>
<dbReference type="FunCoup" id="Q9LJI2">
    <property type="interactions" value="691"/>
</dbReference>
<dbReference type="STRING" id="3702.Q9LJI2"/>
<dbReference type="TCDB" id="2.A.19.4.7">
    <property type="family name" value="the ca(2+):cation antiporter (caca) family"/>
</dbReference>
<dbReference type="PaxDb" id="3702-AT3G14070.1"/>
<dbReference type="ProteomicsDB" id="223936"/>
<dbReference type="EnsemblPlants" id="AT3G14070.1">
    <property type="protein sequence ID" value="AT3G14070.1"/>
    <property type="gene ID" value="AT3G14070"/>
</dbReference>
<dbReference type="GeneID" id="820622"/>
<dbReference type="Gramene" id="AT3G14070.1">
    <property type="protein sequence ID" value="AT3G14070.1"/>
    <property type="gene ID" value="AT3G14070"/>
</dbReference>
<dbReference type="KEGG" id="ath:AT3G14070"/>
<dbReference type="Araport" id="AT3G14070"/>
<dbReference type="TAIR" id="AT3G14070">
    <property type="gene designation" value="CAX9"/>
</dbReference>
<dbReference type="eggNOG" id="KOG2088">
    <property type="taxonomic scope" value="Eukaryota"/>
</dbReference>
<dbReference type="eggNOG" id="KOG2399">
    <property type="taxonomic scope" value="Eukaryota"/>
</dbReference>
<dbReference type="HOGENOM" id="CLU_004979_1_1_1"/>
<dbReference type="InParanoid" id="Q9LJI2"/>
<dbReference type="OMA" id="MRIMACD"/>
<dbReference type="PhylomeDB" id="Q9LJI2"/>
<dbReference type="PRO" id="PR:Q9LJI2"/>
<dbReference type="Proteomes" id="UP000006548">
    <property type="component" value="Chromosome 3"/>
</dbReference>
<dbReference type="ExpressionAtlas" id="Q9LJI2">
    <property type="expression patterns" value="baseline and differential"/>
</dbReference>
<dbReference type="GO" id="GO:0030659">
    <property type="term" value="C:cytoplasmic vesicle membrane"/>
    <property type="evidence" value="ECO:0000314"/>
    <property type="project" value="TAIR"/>
</dbReference>
<dbReference type="GO" id="GO:0012505">
    <property type="term" value="C:endomembrane system"/>
    <property type="evidence" value="ECO:0000314"/>
    <property type="project" value="TAIR"/>
</dbReference>
<dbReference type="GO" id="GO:0010008">
    <property type="term" value="C:endosome membrane"/>
    <property type="evidence" value="ECO:0007669"/>
    <property type="project" value="UniProtKB-SubCell"/>
</dbReference>
<dbReference type="GO" id="GO:0005774">
    <property type="term" value="C:vacuolar membrane"/>
    <property type="evidence" value="ECO:0000314"/>
    <property type="project" value="TAIR"/>
</dbReference>
<dbReference type="GO" id="GO:0005773">
    <property type="term" value="C:vacuole"/>
    <property type="evidence" value="ECO:0000314"/>
    <property type="project" value="TAIR"/>
</dbReference>
<dbReference type="GO" id="GO:0015297">
    <property type="term" value="F:antiporter activity"/>
    <property type="evidence" value="ECO:0007669"/>
    <property type="project" value="UniProtKB-KW"/>
</dbReference>
<dbReference type="GO" id="GO:0005384">
    <property type="term" value="F:manganese ion transmembrane transporter activity"/>
    <property type="evidence" value="ECO:0000315"/>
    <property type="project" value="TAIR"/>
</dbReference>
<dbReference type="GO" id="GO:0008324">
    <property type="term" value="F:monoatomic cation transmembrane transporter activity"/>
    <property type="evidence" value="ECO:0000314"/>
    <property type="project" value="TAIR"/>
</dbReference>
<dbReference type="GO" id="GO:0015079">
    <property type="term" value="F:potassium ion transmembrane transporter activity"/>
    <property type="evidence" value="ECO:0000315"/>
    <property type="project" value="TAIR"/>
</dbReference>
<dbReference type="GO" id="GO:0015081">
    <property type="term" value="F:sodium ion transmembrane transporter activity"/>
    <property type="evidence" value="ECO:0000315"/>
    <property type="project" value="TAIR"/>
</dbReference>
<dbReference type="GO" id="GO:0030003">
    <property type="term" value="P:intracellular monoatomic cation homeostasis"/>
    <property type="evidence" value="ECO:0000314"/>
    <property type="project" value="TAIR"/>
</dbReference>
<dbReference type="GO" id="GO:0043157">
    <property type="term" value="P:response to cation stress"/>
    <property type="evidence" value="ECO:0000270"/>
    <property type="project" value="TAIR"/>
</dbReference>
<dbReference type="FunFam" id="1.20.1420.30:FF:000030">
    <property type="entry name" value="Cation/calcium exchanger 4"/>
    <property type="match status" value="1"/>
</dbReference>
<dbReference type="FunFam" id="1.20.1420.30:FF:000028">
    <property type="entry name" value="Cation/calcium exchanger 5"/>
    <property type="match status" value="1"/>
</dbReference>
<dbReference type="Gene3D" id="1.20.1420.30">
    <property type="entry name" value="NCX, central ion-binding region"/>
    <property type="match status" value="2"/>
</dbReference>
<dbReference type="InterPro" id="IPR051359">
    <property type="entry name" value="CaCA_antiporter"/>
</dbReference>
<dbReference type="InterPro" id="IPR004837">
    <property type="entry name" value="NaCa_Exmemb"/>
</dbReference>
<dbReference type="InterPro" id="IPR044880">
    <property type="entry name" value="NCX_ion-bd_dom_sf"/>
</dbReference>
<dbReference type="PANTHER" id="PTHR12266:SF21">
    <property type="entry name" value="CATION_CALCIUM EXCHANGER 3"/>
    <property type="match status" value="1"/>
</dbReference>
<dbReference type="PANTHER" id="PTHR12266">
    <property type="entry name" value="NA+/CA2+ K+ INDEPENDENT EXCHANGER"/>
    <property type="match status" value="1"/>
</dbReference>
<dbReference type="Pfam" id="PF01699">
    <property type="entry name" value="Na_Ca_ex"/>
    <property type="match status" value="2"/>
</dbReference>
<protein>
    <recommendedName>
        <fullName>Cation/calcium exchanger 3</fullName>
        <shortName>AtCCX3</shortName>
    </recommendedName>
    <alternativeName>
        <fullName>Protein CATION CALCIUM EXCHANGER 3</fullName>
    </alternativeName>
    <alternativeName>
        <fullName>Protein CATION EXCHANGER 9</fullName>
    </alternativeName>
</protein>
<sequence length="643" mass="70157">MSAVSFLYSSKTPKFRGVFNGICALVLFCFFFDRSELLRNPLLRNASFVNGGSGSTSGGITQFMVIRRNARQIETNGSGNNSSLSSSSTVLCSGLHKHMGYADQCEFLKANPICSPDGFFDYLSFFYCSCRDFSILGYMMLGVWLVALFYLLGNTAADYFCCSLEKLSKLLRLPPTVAGVTLLPLGNGAPDVFASIAAFVGTDKGEVGLNSVLGGAVFVTSVVVGIVSLCVADKEVKIDKNCFIRDLSFFLFSLVSLLVILMVGRVTVRIAIAFVSIYVVYAFLVAANVILRKHAKRFKLEALTPLLPMQGSVFSPSVGEDMPMNTPLIETETEDGPPRLQSLPQWMWASNVAIYSNHFAKVSVHDEDRPPWGWIDDTAEVESSSCTKFTSLLEIPLTIPRRLTIPSVEEDTWSKTYAVASVSLAPVLLASLWSSQDDVSLQACGVAYFFSVVIGSTLGFLAYKNTEPDHPPRRFLIPWVLGGFIMSIVWFYMIANELVALLVTFGEIYGINPSILALTVLAWGNSMGDLVSNIALTMNGGDGVQIALSGCYAGPMFNTLVGLGMSMLFGAWSKSPDTYMLPEDKSLFYTLGFLVLGLVWAMVILPRNDMQPSRTLGVGLIAIYLIFVTFRLSCAMGFIPWAA</sequence>
<reference key="1">
    <citation type="journal article" date="2000" name="DNA Res.">
        <title>Structural analysis of Arabidopsis thaliana chromosome 3. II. Sequence features of the 4,251,695 bp regions covered by 90 P1, TAC and BAC clones.</title>
        <authorList>
            <person name="Kaneko T."/>
            <person name="Katoh T."/>
            <person name="Sato S."/>
            <person name="Nakamura Y."/>
            <person name="Asamizu E."/>
            <person name="Tabata S."/>
        </authorList>
    </citation>
    <scope>NUCLEOTIDE SEQUENCE [LARGE SCALE GENOMIC DNA]</scope>
    <source>
        <strain>cv. Columbia</strain>
    </source>
</reference>
<reference key="2">
    <citation type="journal article" date="2017" name="Plant J.">
        <title>Araport11: a complete reannotation of the Arabidopsis thaliana reference genome.</title>
        <authorList>
            <person name="Cheng C.Y."/>
            <person name="Krishnakumar V."/>
            <person name="Chan A.P."/>
            <person name="Thibaud-Nissen F."/>
            <person name="Schobel S."/>
            <person name="Town C.D."/>
        </authorList>
    </citation>
    <scope>GENOME REANNOTATION</scope>
    <source>
        <strain>cv. Columbia</strain>
    </source>
</reference>
<reference key="3">
    <citation type="journal article" date="2001" name="Plant Physiol.">
        <title>Phylogenetic relationships within cation transporter families of Arabidopsis.</title>
        <authorList>
            <person name="Maeser P."/>
            <person name="Thomine S."/>
            <person name="Schroeder J.I."/>
            <person name="Ward J.M."/>
            <person name="Hirschi K."/>
            <person name="Sze H."/>
            <person name="Talke I.N."/>
            <person name="Amtmann A."/>
            <person name="Maathuis F.J.M."/>
            <person name="Sanders D."/>
            <person name="Harper J.F."/>
            <person name="Tchieu J."/>
            <person name="Gribskov M."/>
            <person name="Persans M.W."/>
            <person name="Salt D.E."/>
            <person name="Kim S.A."/>
            <person name="Guerinot M.L."/>
        </authorList>
    </citation>
    <scope>GENE FAMILY</scope>
    <scope>NOMENCLATURE</scope>
</reference>
<reference key="4">
    <citation type="journal article" date="2008" name="Plant Physiol.">
        <title>AtCCX3 is an Arabidopsis endomembrane H+ -dependent K+ transporter.</title>
        <authorList>
            <person name="Morris J."/>
            <person name="Tian H."/>
            <person name="Park S."/>
            <person name="Sreevidya C.S."/>
            <person name="Ward J.M."/>
            <person name="Hirschi K.D."/>
        </authorList>
    </citation>
    <scope>FUNCTION</scope>
    <scope>DISRUPTION PHENOTYPE</scope>
    <scope>INDUCTION</scope>
    <scope>TISSUE SPECIFICITY</scope>
    <scope>SUBCELLULAR LOCATION</scope>
</reference>
<name>CCX3_ARATH</name>
<accession>Q9LJI2</accession>
<gene>
    <name type="primary">CCX3</name>
    <name type="synonym">CAX9</name>
    <name type="ordered locus">At3g14070</name>
    <name type="ORF">MAG2.9</name>
</gene>
<evidence type="ECO:0000255" key="1"/>
<evidence type="ECO:0000269" key="2">
    <source>
    </source>
</evidence>
<evidence type="ECO:0000305" key="3"/>
<keyword id="KW-0050">Antiport</keyword>
<keyword id="KW-0967">Endosome</keyword>
<keyword id="KW-0406">Ion transport</keyword>
<keyword id="KW-0472">Membrane</keyword>
<keyword id="KW-0630">Potassium</keyword>
<keyword id="KW-0633">Potassium transport</keyword>
<keyword id="KW-1185">Reference proteome</keyword>
<keyword id="KW-0915">Sodium</keyword>
<keyword id="KW-0739">Sodium transport</keyword>
<keyword id="KW-0812">Transmembrane</keyword>
<keyword id="KW-1133">Transmembrane helix</keyword>
<keyword id="KW-0813">Transport</keyword>
<keyword id="KW-0926">Vacuole</keyword>
<proteinExistence type="evidence at transcript level"/>
<feature type="chain" id="PRO_0000378325" description="Cation/calcium exchanger 3">
    <location>
        <begin position="1"/>
        <end position="643"/>
    </location>
</feature>
<feature type="transmembrane region" description="Helical" evidence="1">
    <location>
        <begin position="18"/>
        <end position="38"/>
    </location>
</feature>
<feature type="transmembrane region" description="Helical" evidence="1">
    <location>
        <begin position="133"/>
        <end position="153"/>
    </location>
</feature>
<feature type="transmembrane region" description="Helical" evidence="1">
    <location>
        <begin position="180"/>
        <end position="200"/>
    </location>
</feature>
<feature type="transmembrane region" description="Helical" evidence="1">
    <location>
        <begin position="212"/>
        <end position="232"/>
    </location>
</feature>
<feature type="transmembrane region" description="Helical" evidence="1">
    <location>
        <begin position="243"/>
        <end position="263"/>
    </location>
</feature>
<feature type="transmembrane region" description="Helical" evidence="1">
    <location>
        <begin position="270"/>
        <end position="290"/>
    </location>
</feature>
<feature type="transmembrane region" description="Helical" evidence="1">
    <location>
        <begin position="413"/>
        <end position="433"/>
    </location>
</feature>
<feature type="transmembrane region" description="Helical" evidence="1">
    <location>
        <begin position="443"/>
        <end position="463"/>
    </location>
</feature>
<feature type="transmembrane region" description="Helical" evidence="1">
    <location>
        <begin position="475"/>
        <end position="495"/>
    </location>
</feature>
<feature type="transmembrane region" description="Helical" evidence="1">
    <location>
        <begin position="498"/>
        <end position="518"/>
    </location>
</feature>
<feature type="transmembrane region" description="Helical" evidence="1">
    <location>
        <begin position="552"/>
        <end position="572"/>
    </location>
</feature>
<feature type="transmembrane region" description="Helical" evidence="1">
    <location>
        <begin position="586"/>
        <end position="606"/>
    </location>
</feature>
<feature type="transmembrane region" description="Helical" evidence="1">
    <location>
        <begin position="619"/>
        <end position="639"/>
    </location>
</feature>
<comment type="function">
    <text evidence="2">Endomembrane-localized H(+)-dependent K(+) and Na(+) transporter. May have a function associated with the pollen vacuole during tube elongation and polarized top growth.</text>
</comment>
<comment type="subcellular location">
    <subcellularLocation>
        <location evidence="2">Vacuole membrane</location>
        <topology evidence="2">Multi-pass membrane protein</topology>
    </subcellularLocation>
    <subcellularLocation>
        <location evidence="2">Endosome membrane</location>
        <topology evidence="2">Multi-pass membrane protein</topology>
    </subcellularLocation>
</comment>
<comment type="tissue specificity">
    <text evidence="2">Expressed in roots, leaves, stems and flowers.</text>
</comment>
<comment type="induction">
    <text evidence="2">Up-regulated by exogenous Na(+), K(+) and Mn(2+).</text>
</comment>
<comment type="disruption phenotype">
    <text evidence="2">No visible phenotype.</text>
</comment>
<comment type="similarity">
    <text evidence="3">Belongs to the Ca(2+):cation antiporter (CaCA) (TC 2.A.19) family. Cation/calcium exchanger (CCX) subfamily.</text>
</comment>